<feature type="chain" id="PRO_0000282540" description="Insulin-like growth factor 2 mRNA-binding protein 3">
    <location>
        <begin position="1"/>
        <end position="584"/>
    </location>
</feature>
<feature type="domain" description="RRM 1" evidence="4">
    <location>
        <begin position="2"/>
        <end position="75"/>
    </location>
</feature>
<feature type="domain" description="RRM 2" evidence="4">
    <location>
        <begin position="81"/>
        <end position="156"/>
    </location>
</feature>
<feature type="domain" description="KH 1" evidence="3">
    <location>
        <begin position="196"/>
        <end position="261"/>
    </location>
</feature>
<feature type="domain" description="KH 2" evidence="3">
    <location>
        <begin position="277"/>
        <end position="344"/>
    </location>
</feature>
<feature type="domain" description="KH 3" evidence="3">
    <location>
        <begin position="409"/>
        <end position="474"/>
    </location>
</feature>
<feature type="domain" description="KH 4" evidence="3">
    <location>
        <begin position="491"/>
        <end position="557"/>
    </location>
</feature>
<feature type="region of interest" description="Disordered" evidence="5">
    <location>
        <begin position="160"/>
        <end position="199"/>
    </location>
</feature>
<feature type="compositionally biased region" description="Polar residues" evidence="5">
    <location>
        <begin position="184"/>
        <end position="194"/>
    </location>
</feature>
<accession>Q5ZLP8</accession>
<name>IF2B3_CHICK</name>
<proteinExistence type="evidence at transcript level"/>
<gene>
    <name type="primary">IGF2BP3</name>
    <name type="synonym">VICKZ3</name>
    <name type="ORF">RCJMB04_5e15</name>
</gene>
<sequence>MNKLYIGNLGENVSPLDLESLFKDSKIPFSGQFLVKTGYAFVDCPDESWAMKAIEALSGKVELHGKLIEVEHSVPKRQRSRKLQIRNIPPHLQWEVLDSLLAQYGTVENCEQVNTDTETAVVNVTYGNKDQARQAIEKLNGFQLENYSLKVAYIPDEMAAQQPPQQHPQGRRGFGQRGPPRQGSPSATTRQKPQSDVPLRMLVPTQFVGAIIGKEGATIRNITKQTQSKIDIHRKENAGAAEKPITIHSTPEGCSTACKIIMEIMQKEAQDTKFTEEIPLKILAHNNFVGRLIGKEGRNLKKIEQDTDTKITISPLQDLTLYNPERTITVKGSIETCAKAEEEIMKKIRESYENDIAAMNLQAHLIPGLNLNALGLFPPSSSGIPPPAVSVASAAAAASYPPFGQQPESETVHLFIPALAVGAIIGKQGQHIKQLSRFAGASIKIAPAEGPDAKLRMVIITGPPEAQFKAQGRIYGKLKEENFFGPKEEVKLEAHIKVPSYAAGRVIGKGGKTVNELQNLTSAEVVVPRDQTPDENDQVVVKITGHFYACQLAQRKIQEILAQVRRQQQQQKTLQSGQPQPRRK</sequence>
<comment type="function">
    <text evidence="2">RNA-binding factor that may recruit target transcripts to cytoplasmic protein-RNA complexes (mRNPs). This transcript 'caging' into mRNPs allows mRNA transport and transient storage. It also modulates the rate and location at which target transcripts encounter the translational apparatus and shields them from endonuclease attacks or microRNA-mediated degradation. Preferentially binds to N6-methyladenosine (m6A)-containing mRNAs and increases their stability.</text>
</comment>
<comment type="subunit">
    <text evidence="2">Homodimer and multimer.</text>
</comment>
<comment type="subcellular location">
    <subcellularLocation>
        <location evidence="1">Cytoplasm</location>
    </subcellularLocation>
    <subcellularLocation>
        <location evidence="1">Nucleus</location>
    </subcellularLocation>
    <subcellularLocation>
        <location evidence="2">Cytoplasm</location>
        <location evidence="2">P-body</location>
    </subcellularLocation>
    <subcellularLocation>
        <location evidence="2">Cytoplasm</location>
        <location evidence="2">Stress granule</location>
    </subcellularLocation>
</comment>
<comment type="domain">
    <text evidence="2">All KH domains contribute binding to target mRNA. Domains KH3 and KH4 are the major RNA-binding modules, although KH1 and KH2 also contribute. They are also required for RNA-dependent homo- and heterooligomerization. The integrity of KH domains seems not to be required for localization to stress granules.</text>
</comment>
<comment type="similarity">
    <text evidence="6">Belongs to the RRM IMP/VICKZ family.</text>
</comment>
<dbReference type="EMBL" id="AJ719686">
    <property type="protein sequence ID" value="CAG31345.1"/>
    <property type="molecule type" value="mRNA"/>
</dbReference>
<dbReference type="RefSeq" id="NP_001006359.1">
    <property type="nucleotide sequence ID" value="NM_001006359.1"/>
</dbReference>
<dbReference type="RefSeq" id="XP_015136930.1">
    <property type="nucleotide sequence ID" value="XM_015281444.4"/>
</dbReference>
<dbReference type="RefSeq" id="XP_025002963.1">
    <property type="nucleotide sequence ID" value="XM_025147195.3"/>
</dbReference>
<dbReference type="RefSeq" id="XP_046767088.1">
    <property type="nucleotide sequence ID" value="XM_046911132.1"/>
</dbReference>
<dbReference type="RefSeq" id="XP_046767089.1">
    <property type="nucleotide sequence ID" value="XM_046911133.1"/>
</dbReference>
<dbReference type="SMR" id="Q5ZLP8"/>
<dbReference type="BioGRID" id="681555">
    <property type="interactions" value="1"/>
</dbReference>
<dbReference type="FunCoup" id="Q5ZLP8">
    <property type="interactions" value="554"/>
</dbReference>
<dbReference type="STRING" id="9031.ENSGALP00000056269"/>
<dbReference type="PaxDb" id="9031-ENSGALP00000043342"/>
<dbReference type="GeneID" id="420617"/>
<dbReference type="KEGG" id="gga:420617"/>
<dbReference type="CTD" id="10643"/>
<dbReference type="VEuPathDB" id="HostDB:geneid_420617"/>
<dbReference type="eggNOG" id="KOG2193">
    <property type="taxonomic scope" value="Eukaryota"/>
</dbReference>
<dbReference type="HOGENOM" id="CLU_020744_1_0_1"/>
<dbReference type="InParanoid" id="Q5ZLP8"/>
<dbReference type="OMA" id="CPDEGWA"/>
<dbReference type="OrthoDB" id="752362at2759"/>
<dbReference type="PhylomeDB" id="Q5ZLP8"/>
<dbReference type="TreeFam" id="TF320229"/>
<dbReference type="PRO" id="PR:Q5ZLP8"/>
<dbReference type="Proteomes" id="UP000000539">
    <property type="component" value="Chromosome 2"/>
</dbReference>
<dbReference type="Bgee" id="ENSGALG00000010961">
    <property type="expression patterns" value="Expressed in granulocyte and 12 other cell types or tissues"/>
</dbReference>
<dbReference type="GO" id="GO:0005737">
    <property type="term" value="C:cytoplasm"/>
    <property type="evidence" value="ECO:0000318"/>
    <property type="project" value="GO_Central"/>
</dbReference>
<dbReference type="GO" id="GO:0010494">
    <property type="term" value="C:cytoplasmic stress granule"/>
    <property type="evidence" value="ECO:0000250"/>
    <property type="project" value="UniProtKB"/>
</dbReference>
<dbReference type="GO" id="GO:0005829">
    <property type="term" value="C:cytosol"/>
    <property type="evidence" value="ECO:0000318"/>
    <property type="project" value="GO_Central"/>
</dbReference>
<dbReference type="GO" id="GO:0005634">
    <property type="term" value="C:nucleus"/>
    <property type="evidence" value="ECO:0000318"/>
    <property type="project" value="GO_Central"/>
</dbReference>
<dbReference type="GO" id="GO:0000932">
    <property type="term" value="C:P-body"/>
    <property type="evidence" value="ECO:0000250"/>
    <property type="project" value="UniProtKB"/>
</dbReference>
<dbReference type="GO" id="GO:0003730">
    <property type="term" value="F:mRNA 3'-UTR binding"/>
    <property type="evidence" value="ECO:0000250"/>
    <property type="project" value="UniProtKB"/>
</dbReference>
<dbReference type="GO" id="GO:1990247">
    <property type="term" value="F:N6-methyladenosine-containing RNA reader activity"/>
    <property type="evidence" value="ECO:0000250"/>
    <property type="project" value="UniProtKB"/>
</dbReference>
<dbReference type="GO" id="GO:0070934">
    <property type="term" value="P:CRD-mediated mRNA stabilization"/>
    <property type="evidence" value="ECO:0000250"/>
    <property type="project" value="UniProtKB"/>
</dbReference>
<dbReference type="GO" id="GO:0051028">
    <property type="term" value="P:mRNA transport"/>
    <property type="evidence" value="ECO:0007669"/>
    <property type="project" value="UniProtKB-KW"/>
</dbReference>
<dbReference type="GO" id="GO:0007399">
    <property type="term" value="P:nervous system development"/>
    <property type="evidence" value="ECO:0000318"/>
    <property type="project" value="GO_Central"/>
</dbReference>
<dbReference type="GO" id="GO:0006417">
    <property type="term" value="P:regulation of translation"/>
    <property type="evidence" value="ECO:0007669"/>
    <property type="project" value="UniProtKB-KW"/>
</dbReference>
<dbReference type="CDD" id="cd22490">
    <property type="entry name" value="KH-I_IGF2BP1_rpt1"/>
    <property type="match status" value="1"/>
</dbReference>
<dbReference type="CDD" id="cd22498">
    <property type="entry name" value="KH-I_IGF2BP3_rpt3"/>
    <property type="match status" value="1"/>
</dbReference>
<dbReference type="CDD" id="cd12627">
    <property type="entry name" value="RRM1_IGF2BP3"/>
    <property type="match status" value="1"/>
</dbReference>
<dbReference type="CDD" id="cd12630">
    <property type="entry name" value="RRM2_IGF2BP3"/>
    <property type="match status" value="1"/>
</dbReference>
<dbReference type="FunFam" id="3.30.70.330:FF:000203">
    <property type="entry name" value="insulin-like growth factor 2 mRNA-binding protein 1"/>
    <property type="match status" value="1"/>
</dbReference>
<dbReference type="FunFam" id="3.30.310.210:FF:000001">
    <property type="entry name" value="insulin-like growth factor 2 mRNA-binding protein 1 isoform X1"/>
    <property type="match status" value="1"/>
</dbReference>
<dbReference type="FunFam" id="3.30.1370.10:FF:000026">
    <property type="entry name" value="Insulin-like growth factor 2 mRNA-binding protein 3"/>
    <property type="match status" value="1"/>
</dbReference>
<dbReference type="FunFam" id="3.30.1370.10:FF:000027">
    <property type="entry name" value="insulin-like growth factor 2 mRNA-binding protein 3 isoform X1"/>
    <property type="match status" value="1"/>
</dbReference>
<dbReference type="FunFam" id="3.30.70.330:FF:000099">
    <property type="entry name" value="insulin-like growth factor 2 mRNA-binding protein 3 isoform X1"/>
    <property type="match status" value="1"/>
</dbReference>
<dbReference type="Gene3D" id="3.30.310.210">
    <property type="match status" value="1"/>
</dbReference>
<dbReference type="Gene3D" id="3.30.70.330">
    <property type="match status" value="2"/>
</dbReference>
<dbReference type="Gene3D" id="3.30.1370.10">
    <property type="entry name" value="K Homology domain, type 1"/>
    <property type="match status" value="2"/>
</dbReference>
<dbReference type="InterPro" id="IPR004087">
    <property type="entry name" value="KH_dom"/>
</dbReference>
<dbReference type="InterPro" id="IPR004088">
    <property type="entry name" value="KH_dom_type_1"/>
</dbReference>
<dbReference type="InterPro" id="IPR036612">
    <property type="entry name" value="KH_dom_type_1_sf"/>
</dbReference>
<dbReference type="InterPro" id="IPR012677">
    <property type="entry name" value="Nucleotide-bd_a/b_plait_sf"/>
</dbReference>
<dbReference type="InterPro" id="IPR035979">
    <property type="entry name" value="RBD_domain_sf"/>
</dbReference>
<dbReference type="InterPro" id="IPR000504">
    <property type="entry name" value="RRM_dom"/>
</dbReference>
<dbReference type="PANTHER" id="PTHR10288">
    <property type="entry name" value="KH DOMAIN CONTAINING RNA BINDING PROTEIN"/>
    <property type="match status" value="1"/>
</dbReference>
<dbReference type="Pfam" id="PF00013">
    <property type="entry name" value="KH_1"/>
    <property type="match status" value="4"/>
</dbReference>
<dbReference type="Pfam" id="PF00076">
    <property type="entry name" value="RRM_1"/>
    <property type="match status" value="2"/>
</dbReference>
<dbReference type="SMART" id="SM00322">
    <property type="entry name" value="KH"/>
    <property type="match status" value="4"/>
</dbReference>
<dbReference type="SMART" id="SM00360">
    <property type="entry name" value="RRM"/>
    <property type="match status" value="2"/>
</dbReference>
<dbReference type="SUPFAM" id="SSF54791">
    <property type="entry name" value="Eukaryotic type KH-domain (KH-domain type I)"/>
    <property type="match status" value="4"/>
</dbReference>
<dbReference type="SUPFAM" id="SSF54928">
    <property type="entry name" value="RNA-binding domain, RBD"/>
    <property type="match status" value="1"/>
</dbReference>
<dbReference type="PROSITE" id="PS50084">
    <property type="entry name" value="KH_TYPE_1"/>
    <property type="match status" value="4"/>
</dbReference>
<dbReference type="PROSITE" id="PS50102">
    <property type="entry name" value="RRM"/>
    <property type="match status" value="2"/>
</dbReference>
<reference key="1">
    <citation type="journal article" date="2005" name="Genome Biol.">
        <title>Full-length cDNAs from chicken bursal lymphocytes to facilitate gene function analysis.</title>
        <authorList>
            <person name="Caldwell R.B."/>
            <person name="Kierzek A.M."/>
            <person name="Arakawa H."/>
            <person name="Bezzubov Y."/>
            <person name="Zaim J."/>
            <person name="Fiedler P."/>
            <person name="Kutter S."/>
            <person name="Blagodatski A."/>
            <person name="Kostovska D."/>
            <person name="Koter M."/>
            <person name="Plachy J."/>
            <person name="Carninci P."/>
            <person name="Hayashizaki Y."/>
            <person name="Buerstedde J.-M."/>
        </authorList>
    </citation>
    <scope>NUCLEOTIDE SEQUENCE [LARGE SCALE MRNA]</scope>
    <source>
        <strain>CB</strain>
        <tissue>Bursa of Fabricius</tissue>
    </source>
</reference>
<reference key="2">
    <citation type="journal article" date="2005" name="Biol. Cell">
        <title>VICKZ proteins: a multi-talented family of regulatory RNA-binding proteins.</title>
        <authorList>
            <person name="Yisraeli J.K."/>
        </authorList>
    </citation>
    <scope>REVIEW</scope>
</reference>
<protein>
    <recommendedName>
        <fullName>Insulin-like growth factor 2 mRNA-binding protein 3</fullName>
        <shortName>IGF2 mRNA-binding protein 3</shortName>
        <shortName>IMP-3</shortName>
    </recommendedName>
    <alternativeName>
        <fullName>IGF-II mRNA-binding protein 3</fullName>
    </alternativeName>
    <alternativeName>
        <fullName>VICKZ family member 3</fullName>
    </alternativeName>
</protein>
<organism>
    <name type="scientific">Gallus gallus</name>
    <name type="common">Chicken</name>
    <dbReference type="NCBI Taxonomy" id="9031"/>
    <lineage>
        <taxon>Eukaryota</taxon>
        <taxon>Metazoa</taxon>
        <taxon>Chordata</taxon>
        <taxon>Craniata</taxon>
        <taxon>Vertebrata</taxon>
        <taxon>Euteleostomi</taxon>
        <taxon>Archelosauria</taxon>
        <taxon>Archosauria</taxon>
        <taxon>Dinosauria</taxon>
        <taxon>Saurischia</taxon>
        <taxon>Theropoda</taxon>
        <taxon>Coelurosauria</taxon>
        <taxon>Aves</taxon>
        <taxon>Neognathae</taxon>
        <taxon>Galloanserae</taxon>
        <taxon>Galliformes</taxon>
        <taxon>Phasianidae</taxon>
        <taxon>Phasianinae</taxon>
        <taxon>Gallus</taxon>
    </lineage>
</organism>
<evidence type="ECO:0000250" key="1"/>
<evidence type="ECO:0000250" key="2">
    <source>
        <dbReference type="UniProtKB" id="O00425"/>
    </source>
</evidence>
<evidence type="ECO:0000255" key="3">
    <source>
        <dbReference type="PROSITE-ProRule" id="PRU00117"/>
    </source>
</evidence>
<evidence type="ECO:0000255" key="4">
    <source>
        <dbReference type="PROSITE-ProRule" id="PRU00176"/>
    </source>
</evidence>
<evidence type="ECO:0000256" key="5">
    <source>
        <dbReference type="SAM" id="MobiDB-lite"/>
    </source>
</evidence>
<evidence type="ECO:0000305" key="6"/>
<keyword id="KW-0963">Cytoplasm</keyword>
<keyword id="KW-0509">mRNA transport</keyword>
<keyword id="KW-0539">Nucleus</keyword>
<keyword id="KW-1185">Reference proteome</keyword>
<keyword id="KW-0677">Repeat</keyword>
<keyword id="KW-0694">RNA-binding</keyword>
<keyword id="KW-0810">Translation regulation</keyword>
<keyword id="KW-0813">Transport</keyword>